<evidence type="ECO:0000255" key="1">
    <source>
        <dbReference type="HAMAP-Rule" id="MF_00236"/>
    </source>
</evidence>
<evidence type="ECO:0000256" key="2">
    <source>
        <dbReference type="SAM" id="MobiDB-lite"/>
    </source>
</evidence>
<protein>
    <recommendedName>
        <fullName evidence="1">Sec-independent protein translocase protein TatA</fullName>
    </recommendedName>
</protein>
<organism>
    <name type="scientific">Moorella thermoacetica (strain ATCC 39073 / JCM 9320)</name>
    <dbReference type="NCBI Taxonomy" id="264732"/>
    <lineage>
        <taxon>Bacteria</taxon>
        <taxon>Bacillati</taxon>
        <taxon>Bacillota</taxon>
        <taxon>Clostridia</taxon>
        <taxon>Moorellales</taxon>
        <taxon>Moorellaceae</taxon>
        <taxon>Moorella</taxon>
    </lineage>
</organism>
<comment type="function">
    <text evidence="1">Part of the twin-arginine translocation (Tat) system that transports large folded proteins containing a characteristic twin-arginine motif in their signal peptide across membranes. TatA could form the protein-conducting channel of the Tat system.</text>
</comment>
<comment type="subunit">
    <text evidence="1">Forms a complex with TatC.</text>
</comment>
<comment type="subcellular location">
    <subcellularLocation>
        <location evidence="1">Cell membrane</location>
        <topology evidence="1">Single-pass membrane protein</topology>
    </subcellularLocation>
</comment>
<comment type="similarity">
    <text evidence="1">Belongs to the TatA/E family.</text>
</comment>
<feature type="chain" id="PRO_1000058962" description="Sec-independent protein translocase protein TatA">
    <location>
        <begin position="1"/>
        <end position="73"/>
    </location>
</feature>
<feature type="transmembrane region" description="Helical" evidence="1">
    <location>
        <begin position="1"/>
        <end position="21"/>
    </location>
</feature>
<feature type="region of interest" description="Disordered" evidence="2">
    <location>
        <begin position="52"/>
        <end position="73"/>
    </location>
</feature>
<reference key="1">
    <citation type="journal article" date="2008" name="Environ. Microbiol.">
        <title>The complete genome sequence of Moorella thermoacetica (f. Clostridium thermoaceticum).</title>
        <authorList>
            <person name="Pierce E."/>
            <person name="Xie G."/>
            <person name="Barabote R.D."/>
            <person name="Saunders E."/>
            <person name="Han C.S."/>
            <person name="Detter J.C."/>
            <person name="Richardson P."/>
            <person name="Brettin T.S."/>
            <person name="Das A."/>
            <person name="Ljungdahl L.G."/>
            <person name="Ragsdale S.W."/>
        </authorList>
    </citation>
    <scope>NUCLEOTIDE SEQUENCE [LARGE SCALE GENOMIC DNA]</scope>
    <source>
        <strain>ATCC 39073 / JCM 9320</strain>
    </source>
</reference>
<proteinExistence type="inferred from homology"/>
<name>TATA_MOOTA</name>
<dbReference type="EMBL" id="CP000232">
    <property type="protein sequence ID" value="ABC19592.1"/>
    <property type="molecule type" value="Genomic_DNA"/>
</dbReference>
<dbReference type="RefSeq" id="YP_430135.1">
    <property type="nucleotide sequence ID" value="NC_007644.1"/>
</dbReference>
<dbReference type="SMR" id="Q2RIZ7"/>
<dbReference type="STRING" id="264732.Moth_1278"/>
<dbReference type="EnsemblBacteria" id="ABC19592">
    <property type="protein sequence ID" value="ABC19592"/>
    <property type="gene ID" value="Moth_1278"/>
</dbReference>
<dbReference type="KEGG" id="mta:Moth_1278"/>
<dbReference type="PATRIC" id="fig|264732.11.peg.1371"/>
<dbReference type="eggNOG" id="COG1826">
    <property type="taxonomic scope" value="Bacteria"/>
</dbReference>
<dbReference type="HOGENOM" id="CLU_086034_6_0_9"/>
<dbReference type="OrthoDB" id="9800908at2"/>
<dbReference type="GO" id="GO:0033281">
    <property type="term" value="C:TAT protein transport complex"/>
    <property type="evidence" value="ECO:0007669"/>
    <property type="project" value="UniProtKB-UniRule"/>
</dbReference>
<dbReference type="GO" id="GO:0008320">
    <property type="term" value="F:protein transmembrane transporter activity"/>
    <property type="evidence" value="ECO:0007669"/>
    <property type="project" value="UniProtKB-UniRule"/>
</dbReference>
<dbReference type="GO" id="GO:0043953">
    <property type="term" value="P:protein transport by the Tat complex"/>
    <property type="evidence" value="ECO:0007669"/>
    <property type="project" value="UniProtKB-UniRule"/>
</dbReference>
<dbReference type="Gene3D" id="1.20.5.3310">
    <property type="match status" value="1"/>
</dbReference>
<dbReference type="HAMAP" id="MF_00236">
    <property type="entry name" value="TatA_E"/>
    <property type="match status" value="1"/>
</dbReference>
<dbReference type="InterPro" id="IPR003369">
    <property type="entry name" value="TatA/B/E"/>
</dbReference>
<dbReference type="InterPro" id="IPR006312">
    <property type="entry name" value="TatA/E"/>
</dbReference>
<dbReference type="NCBIfam" id="NF011430">
    <property type="entry name" value="PRK14861.1"/>
    <property type="match status" value="1"/>
</dbReference>
<dbReference type="NCBIfam" id="TIGR01411">
    <property type="entry name" value="tatAE"/>
    <property type="match status" value="1"/>
</dbReference>
<dbReference type="PANTHER" id="PTHR42982">
    <property type="entry name" value="SEC-INDEPENDENT PROTEIN TRANSLOCASE PROTEIN TATA"/>
    <property type="match status" value="1"/>
</dbReference>
<dbReference type="PANTHER" id="PTHR42982:SF1">
    <property type="entry name" value="SEC-INDEPENDENT PROTEIN TRANSLOCASE PROTEIN TATA"/>
    <property type="match status" value="1"/>
</dbReference>
<dbReference type="Pfam" id="PF02416">
    <property type="entry name" value="TatA_B_E"/>
    <property type="match status" value="1"/>
</dbReference>
<dbReference type="PRINTS" id="PR01506">
    <property type="entry name" value="TATBPROTEIN"/>
</dbReference>
<sequence length="73" mass="7794">MFGLGAPELILILILALIIFGPGKLPEVGRALGKGIREFKNATNSVTEEIKEAAKIDDGNNNSDKEKATRQAS</sequence>
<accession>Q2RIZ7</accession>
<keyword id="KW-1003">Cell membrane</keyword>
<keyword id="KW-0472">Membrane</keyword>
<keyword id="KW-0653">Protein transport</keyword>
<keyword id="KW-0811">Translocation</keyword>
<keyword id="KW-0812">Transmembrane</keyword>
<keyword id="KW-1133">Transmembrane helix</keyword>
<keyword id="KW-0813">Transport</keyword>
<gene>
    <name evidence="1" type="primary">tatA</name>
    <name type="ordered locus">Moth_1278</name>
</gene>